<protein>
    <recommendedName>
        <fullName evidence="4">NADP-dependent (R)-specific alcohol dehydrogenase</fullName>
        <shortName evidence="4">(R)-specific ADH</shortName>
        <ecNumber evidence="2">1.1.1.-</ecNumber>
    </recommendedName>
    <alternativeName>
        <fullName evidence="3">Ketoreductase</fullName>
        <shortName evidence="3">KRED</shortName>
    </alternativeName>
</protein>
<dbReference type="EC" id="1.1.1.-" evidence="2"/>
<dbReference type="EMBL" id="AY267012">
    <property type="protein sequence ID" value="AAP94029.1"/>
    <property type="molecule type" value="Genomic_DNA"/>
</dbReference>
<dbReference type="EMBL" id="BJVK01000003">
    <property type="protein sequence ID" value="GEL27617.1"/>
    <property type="molecule type" value="Genomic_DNA"/>
</dbReference>
<dbReference type="EMBL" id="CP029971">
    <property type="protein sequence ID" value="QGV24812.1"/>
    <property type="molecule type" value="Genomic_DNA"/>
</dbReference>
<dbReference type="RefSeq" id="WP_054768785.1">
    <property type="nucleotide sequence ID" value="NZ_QFFL01000001.1"/>
</dbReference>
<dbReference type="PDB" id="4RF2">
    <property type="method" value="X-ray"/>
    <property type="resolution" value="2.09 A"/>
    <property type="chains" value="A/B=1-252"/>
</dbReference>
<dbReference type="PDB" id="4RF3">
    <property type="method" value="X-ray"/>
    <property type="resolution" value="1.69 A"/>
    <property type="chains" value="A/B=1-252"/>
</dbReference>
<dbReference type="PDB" id="4RF4">
    <property type="method" value="X-ray"/>
    <property type="resolution" value="2.20 A"/>
    <property type="chains" value="A/B=1-252"/>
</dbReference>
<dbReference type="PDB" id="4RF5">
    <property type="method" value="X-ray"/>
    <property type="resolution" value="1.60 A"/>
    <property type="chains" value="A/B=1-252"/>
</dbReference>
<dbReference type="PDB" id="7EJH">
    <property type="method" value="X-ray"/>
    <property type="resolution" value="1.73 A"/>
    <property type="chains" value="A/B/C/D=1-252"/>
</dbReference>
<dbReference type="PDB" id="7EJI">
    <property type="method" value="X-ray"/>
    <property type="resolution" value="1.56 A"/>
    <property type="chains" value="A/B/C/D=1-252"/>
</dbReference>
<dbReference type="PDB" id="7EJJ">
    <property type="method" value="X-ray"/>
    <property type="resolution" value="1.80 A"/>
    <property type="chains" value="A/B/C/D=3-252"/>
</dbReference>
<dbReference type="PDB" id="7P36">
    <property type="method" value="X-ray"/>
    <property type="resolution" value="1.14 A"/>
    <property type="chains" value="A=2-252"/>
</dbReference>
<dbReference type="PDB" id="7P7Y">
    <property type="method" value="X-ray"/>
    <property type="resolution" value="1.25 A"/>
    <property type="chains" value="A=2-252"/>
</dbReference>
<dbReference type="PDB" id="7VDO">
    <property type="method" value="X-ray"/>
    <property type="resolution" value="1.86 A"/>
    <property type="chains" value="A/B/C/D=1-252"/>
</dbReference>
<dbReference type="PDB" id="7VE7">
    <property type="method" value="X-ray"/>
    <property type="resolution" value="1.72 A"/>
    <property type="chains" value="A/B/C/D=1-252"/>
</dbReference>
<dbReference type="PDB" id="8KCN">
    <property type="method" value="X-ray"/>
    <property type="resolution" value="1.31 A"/>
    <property type="chains" value="A=2-252"/>
</dbReference>
<dbReference type="PDBsum" id="4RF2"/>
<dbReference type="PDBsum" id="4RF3"/>
<dbReference type="PDBsum" id="4RF4"/>
<dbReference type="PDBsum" id="4RF5"/>
<dbReference type="PDBsum" id="7EJH"/>
<dbReference type="PDBsum" id="7EJI"/>
<dbReference type="PDBsum" id="7EJJ"/>
<dbReference type="PDBsum" id="7P36"/>
<dbReference type="PDBsum" id="7P7Y"/>
<dbReference type="PDBsum" id="7VDO"/>
<dbReference type="PDBsum" id="7VE7"/>
<dbReference type="PDBsum" id="8KCN"/>
<dbReference type="SMR" id="Q6WVP7"/>
<dbReference type="STRING" id="1423764.FC95_GL000191"/>
<dbReference type="GeneID" id="71566997"/>
<dbReference type="KEGG" id="lkf:DNL43_05835"/>
<dbReference type="OrthoDB" id="9805904at2"/>
<dbReference type="EvolutionaryTrace" id="Q6WVP7"/>
<dbReference type="Proteomes" id="UP000321893">
    <property type="component" value="Unassembled WGS sequence"/>
</dbReference>
<dbReference type="GO" id="GO:0046872">
    <property type="term" value="F:metal ion binding"/>
    <property type="evidence" value="ECO:0007669"/>
    <property type="project" value="UniProtKB-KW"/>
</dbReference>
<dbReference type="GO" id="GO:0000166">
    <property type="term" value="F:nucleotide binding"/>
    <property type="evidence" value="ECO:0007669"/>
    <property type="project" value="UniProtKB-KW"/>
</dbReference>
<dbReference type="GO" id="GO:0016491">
    <property type="term" value="F:oxidoreductase activity"/>
    <property type="evidence" value="ECO:0007669"/>
    <property type="project" value="UniProtKB-KW"/>
</dbReference>
<dbReference type="CDD" id="cd05341">
    <property type="entry name" value="3beta-17beta-HSD_like_SDR_c"/>
    <property type="match status" value="1"/>
</dbReference>
<dbReference type="FunFam" id="3.40.50.720:FF:000084">
    <property type="entry name" value="Short-chain dehydrogenase reductase"/>
    <property type="match status" value="1"/>
</dbReference>
<dbReference type="Gene3D" id="3.40.50.720">
    <property type="entry name" value="NAD(P)-binding Rossmann-like Domain"/>
    <property type="match status" value="1"/>
</dbReference>
<dbReference type="InterPro" id="IPR036291">
    <property type="entry name" value="NAD(P)-bd_dom_sf"/>
</dbReference>
<dbReference type="InterPro" id="IPR020904">
    <property type="entry name" value="Sc_DH/Rdtase_CS"/>
</dbReference>
<dbReference type="InterPro" id="IPR002347">
    <property type="entry name" value="SDR_fam"/>
</dbReference>
<dbReference type="NCBIfam" id="NF005559">
    <property type="entry name" value="PRK07231.1"/>
    <property type="match status" value="1"/>
</dbReference>
<dbReference type="PANTHER" id="PTHR24321">
    <property type="entry name" value="DEHYDROGENASES, SHORT CHAIN"/>
    <property type="match status" value="1"/>
</dbReference>
<dbReference type="PANTHER" id="PTHR24321:SF8">
    <property type="entry name" value="ESTRADIOL 17-BETA-DEHYDROGENASE 8-RELATED"/>
    <property type="match status" value="1"/>
</dbReference>
<dbReference type="Pfam" id="PF13561">
    <property type="entry name" value="adh_short_C2"/>
    <property type="match status" value="1"/>
</dbReference>
<dbReference type="PRINTS" id="PR00081">
    <property type="entry name" value="GDHRDH"/>
</dbReference>
<dbReference type="PRINTS" id="PR00080">
    <property type="entry name" value="SDRFAMILY"/>
</dbReference>
<dbReference type="SUPFAM" id="SSF51735">
    <property type="entry name" value="NAD(P)-binding Rossmann-fold domains"/>
    <property type="match status" value="1"/>
</dbReference>
<dbReference type="PROSITE" id="PS00061">
    <property type="entry name" value="ADH_SHORT"/>
    <property type="match status" value="1"/>
</dbReference>
<evidence type="ECO:0000269" key="1">
    <source>
    </source>
</evidence>
<evidence type="ECO:0000269" key="2">
    <source ref="1"/>
</evidence>
<evidence type="ECO:0000303" key="3">
    <source>
    </source>
</evidence>
<evidence type="ECO:0000303" key="4">
    <source ref="1"/>
</evidence>
<evidence type="ECO:0000305" key="5"/>
<evidence type="ECO:0000305" key="6">
    <source>
    </source>
</evidence>
<evidence type="ECO:0000305" key="7">
    <source ref="1"/>
</evidence>
<evidence type="ECO:0000312" key="8">
    <source>
        <dbReference type="EMBL" id="GEL27617.1"/>
    </source>
</evidence>
<evidence type="ECO:0000312" key="9">
    <source>
        <dbReference type="EMBL" id="QGV24812.1"/>
    </source>
</evidence>
<evidence type="ECO:0007744" key="10">
    <source>
        <dbReference type="PDB" id="4RF2"/>
    </source>
</evidence>
<evidence type="ECO:0007744" key="11">
    <source>
        <dbReference type="PDB" id="4RF3"/>
    </source>
</evidence>
<evidence type="ECO:0007744" key="12">
    <source>
        <dbReference type="PDB" id="4RF4"/>
    </source>
</evidence>
<evidence type="ECO:0007744" key="13">
    <source>
        <dbReference type="PDB" id="4RF5"/>
    </source>
</evidence>
<evidence type="ECO:0007829" key="14">
    <source>
        <dbReference type="PDB" id="7P36"/>
    </source>
</evidence>
<reference key="1">
    <citation type="journal article" date="2006" name="Biocatal. Biotransformation">
        <title>Cloning, expression, and characterization of an (R)-specific alcohol dehydrogenase from Lactobacillus kefir.</title>
        <authorList>
            <person name="Weckbecker A."/>
            <person name="Hummel W."/>
        </authorList>
    </citation>
    <scope>NUCLEOTIDE SEQUENCE [GENOMIC DNA]</scope>
    <scope>FUNCTION</scope>
    <scope>CATALYTIC ACTIVITY</scope>
    <scope>COFACTOR</scope>
    <scope>BIOPHYSICOCHEMICAL PROPERTIES</scope>
    <scope>BIOTECHNOLOGY</scope>
    <scope>SUBUNIT</scope>
    <source>
        <strain>ATCC 35411 / DSM 20587 / BCRC 14011 / JCM 5818 / NBRC 15888 / NCIMB 12798 / VKM B-2244 / AK</strain>
    </source>
</reference>
<reference key="2">
    <citation type="submission" date="2018-06" db="EMBL/GenBank/DDBJ databases">
        <title>Genome sequence of Lactobacillus kefiri DH5 isolated from kefir.</title>
        <authorList>
            <person name="Kim D.-H."/>
            <person name="Seo K.-H."/>
        </authorList>
    </citation>
    <scope>NUCLEOTIDE SEQUENCE [LARGE SCALE GENOMIC DNA]</scope>
    <source>
        <strain>DH5</strain>
    </source>
</reference>
<reference key="3">
    <citation type="submission" date="2019-07" db="EMBL/GenBank/DDBJ databases">
        <title>Whole genome shotgun sequence of Lactobacillus kefiri NBRC 15888.</title>
        <authorList>
            <person name="Hosoyama A."/>
            <person name="Uohara A."/>
            <person name="Ohji S."/>
            <person name="Ichikawa N."/>
        </authorList>
    </citation>
    <scope>NUCLEOTIDE SEQUENCE [LARGE SCALE GENOMIC DNA]</scope>
    <source>
        <strain>ATCC 35411 / DSM 20587 / BCRC 14011 / JCM 5818 / NBRC 15888 / NCIMB 12798 / VKM B-2244 / AK</strain>
    </source>
</reference>
<reference evidence="10 11 12 13" key="4">
    <citation type="journal article" date="2015" name="Proc. Natl. Acad. Sci. U.S.A.">
        <title>Origins of stereoselectivity in evolved ketoreductases.</title>
        <authorList>
            <person name="Noey E.L."/>
            <person name="Tibrewal N."/>
            <person name="Jimenez-Oses G."/>
            <person name="Osuna S."/>
            <person name="Park J."/>
            <person name="Bond C.M."/>
            <person name="Cascio D."/>
            <person name="Liang J."/>
            <person name="Zhang X."/>
            <person name="Huisman G.W."/>
            <person name="Tang Y."/>
            <person name="Houk K.N."/>
        </authorList>
    </citation>
    <scope>X-RAY CRYSTALLOGRAPHY (1.60 ANGSTROMS) OF WILD-TYPE AND SEVERAL MUTANTS IN COMPLEX WITH MAGNESIUM AND NADP</scope>
    <scope>ACTIVE SITE</scope>
    <scope>ENZYME ENGINEERING</scope>
</reference>
<sequence>MTDRLKGKVAIVTGGTLGIGLAIADKFVEEGAKVVITGRHADVGEKAAKSIGGTDVIRFVQHDASDEAGWTKLFDTTEEAFGPVTTVVNNAGIAVSKSVEDTTTEEWRKLLSVNLDGVFFGTRLGIQRMKNKGLGASIINMSSIEGFVGDPTLGAYNASKGAVRIMSKSAALDCALKDYDVRVNTVHPGYIKTPLVDDLEGAEEMMSQRTKTPMGHIGEPNDIAWICVYLASDESKFATGAEFVVDGGYTAQ</sequence>
<feature type="chain" id="PRO_0000454238" description="NADP-dependent (R)-specific alcohol dehydrogenase">
    <location>
        <begin position="1"/>
        <end position="252"/>
    </location>
</feature>
<feature type="active site" description="Proton donor/acceptor" evidence="6">
    <location>
        <position position="156"/>
    </location>
</feature>
<feature type="binding site" evidence="1 10">
    <location>
        <begin position="16"/>
        <end position="19"/>
    </location>
    <ligand>
        <name>NADP(+)</name>
        <dbReference type="ChEBI" id="CHEBI:58349"/>
    </ligand>
</feature>
<feature type="binding site" evidence="1 10">
    <location>
        <begin position="39"/>
        <end position="40"/>
    </location>
    <ligand>
        <name>NADP(+)</name>
        <dbReference type="ChEBI" id="CHEBI:58349"/>
    </ligand>
</feature>
<feature type="binding site" evidence="1 10">
    <location>
        <begin position="63"/>
        <end position="64"/>
    </location>
    <ligand>
        <name>NADP(+)</name>
        <dbReference type="ChEBI" id="CHEBI:58349"/>
    </ligand>
</feature>
<feature type="binding site" evidence="1 10">
    <location>
        <position position="90"/>
    </location>
    <ligand>
        <name>NADP(+)</name>
        <dbReference type="ChEBI" id="CHEBI:58349"/>
    </ligand>
</feature>
<feature type="binding site" evidence="1 10">
    <location>
        <position position="156"/>
    </location>
    <ligand>
        <name>NADP(+)</name>
        <dbReference type="ChEBI" id="CHEBI:58349"/>
    </ligand>
</feature>
<feature type="binding site" evidence="1 10">
    <location>
        <position position="160"/>
    </location>
    <ligand>
        <name>NADP(+)</name>
        <dbReference type="ChEBI" id="CHEBI:58349"/>
    </ligand>
</feature>
<feature type="binding site" evidence="1 10">
    <location>
        <begin position="191"/>
        <end position="195"/>
    </location>
    <ligand>
        <name>NADP(+)</name>
        <dbReference type="ChEBI" id="CHEBI:58349"/>
    </ligand>
</feature>
<feature type="binding site" evidence="1 12">
    <location>
        <position position="252"/>
    </location>
    <ligand>
        <name>Mg(2+)</name>
        <dbReference type="ChEBI" id="CHEBI:18420"/>
    </ligand>
</feature>
<feature type="turn" evidence="14">
    <location>
        <begin position="4"/>
        <end position="7"/>
    </location>
</feature>
<feature type="strand" evidence="14">
    <location>
        <begin position="9"/>
        <end position="12"/>
    </location>
</feature>
<feature type="turn" evidence="14">
    <location>
        <begin position="13"/>
        <end position="16"/>
    </location>
</feature>
<feature type="helix" evidence="14">
    <location>
        <begin position="18"/>
        <end position="29"/>
    </location>
</feature>
<feature type="strand" evidence="14">
    <location>
        <begin position="33"/>
        <end position="39"/>
    </location>
</feature>
<feature type="helix" evidence="14">
    <location>
        <begin position="41"/>
        <end position="51"/>
    </location>
</feature>
<feature type="turn" evidence="14">
    <location>
        <begin position="54"/>
        <end position="56"/>
    </location>
</feature>
<feature type="strand" evidence="14">
    <location>
        <begin position="57"/>
        <end position="61"/>
    </location>
</feature>
<feature type="helix" evidence="14">
    <location>
        <begin position="67"/>
        <end position="81"/>
    </location>
</feature>
<feature type="strand" evidence="14">
    <location>
        <begin position="86"/>
        <end position="89"/>
    </location>
</feature>
<feature type="turn" evidence="14">
    <location>
        <begin position="99"/>
        <end position="101"/>
    </location>
</feature>
<feature type="helix" evidence="14">
    <location>
        <begin position="104"/>
        <end position="114"/>
    </location>
</feature>
<feature type="helix" evidence="14">
    <location>
        <begin position="116"/>
        <end position="129"/>
    </location>
</feature>
<feature type="strand" evidence="14">
    <location>
        <begin position="132"/>
        <end position="134"/>
    </location>
</feature>
<feature type="strand" evidence="14">
    <location>
        <begin position="136"/>
        <end position="141"/>
    </location>
</feature>
<feature type="helix" evidence="14">
    <location>
        <begin position="144"/>
        <end position="146"/>
    </location>
</feature>
<feature type="helix" evidence="14">
    <location>
        <begin position="154"/>
        <end position="176"/>
    </location>
</feature>
<feature type="strand" evidence="14">
    <location>
        <begin position="180"/>
        <end position="188"/>
    </location>
</feature>
<feature type="helix" evidence="14">
    <location>
        <begin position="194"/>
        <end position="197"/>
    </location>
</feature>
<feature type="helix" evidence="14">
    <location>
        <begin position="202"/>
        <end position="207"/>
    </location>
</feature>
<feature type="turn" evidence="14">
    <location>
        <begin position="209"/>
        <end position="211"/>
    </location>
</feature>
<feature type="helix" evidence="14">
    <location>
        <begin position="220"/>
        <end position="231"/>
    </location>
</feature>
<feature type="helix" evidence="14">
    <location>
        <begin position="233"/>
        <end position="235"/>
    </location>
</feature>
<feature type="strand" evidence="14">
    <location>
        <begin position="242"/>
        <end position="246"/>
    </location>
</feature>
<feature type="helix" evidence="14">
    <location>
        <begin position="249"/>
        <end position="251"/>
    </location>
</feature>
<organism>
    <name type="scientific">Lentilactobacillus kefiri</name>
    <name type="common">Lactobacillus kefiri</name>
    <dbReference type="NCBI Taxonomy" id="33962"/>
    <lineage>
        <taxon>Bacteria</taxon>
        <taxon>Bacillati</taxon>
        <taxon>Bacillota</taxon>
        <taxon>Bacilli</taxon>
        <taxon>Lactobacillales</taxon>
        <taxon>Lactobacillaceae</taxon>
        <taxon>Lentilactobacillus</taxon>
    </lineage>
</organism>
<name>RADH_LENKE</name>
<keyword id="KW-0002">3D-structure</keyword>
<keyword id="KW-0460">Magnesium</keyword>
<keyword id="KW-0479">Metal-binding</keyword>
<keyword id="KW-0521">NADP</keyword>
<keyword id="KW-0547">Nucleotide-binding</keyword>
<keyword id="KW-0560">Oxidoreductase</keyword>
<accession>Q6WVP7</accession>
<gene>
    <name evidence="4" type="primary">adh</name>
    <name evidence="9" type="ORF">DNL43_05835</name>
    <name evidence="8" type="ORF">LKE01_04370</name>
</gene>
<proteinExistence type="evidence at protein level"/>
<comment type="function">
    <text evidence="2">NADP-dependent (R)-specific alcohol dehydrogenase (ADH) with a broad substrate specificity, able to catalyze in vitro the stereoselective reduction of several aliphatic and aromatic ketones as well as beta-keto esters to the corresponding enantiomerically pure alcohols.</text>
</comment>
<comment type="catalytic activity">
    <reaction evidence="2">
        <text>a secondary alcohol + NADP(+) = a ketone + NADPH + H(+)</text>
        <dbReference type="Rhea" id="RHEA:19257"/>
        <dbReference type="ChEBI" id="CHEBI:15378"/>
        <dbReference type="ChEBI" id="CHEBI:17087"/>
        <dbReference type="ChEBI" id="CHEBI:35681"/>
        <dbReference type="ChEBI" id="CHEBI:57783"/>
        <dbReference type="ChEBI" id="CHEBI:58349"/>
    </reaction>
</comment>
<comment type="catalytic activity">
    <reaction evidence="2">
        <text>acetophenone + NADPH + H(+) = (R)-1-phenylethanol + NADP(+)</text>
        <dbReference type="Rhea" id="RHEA:68136"/>
        <dbReference type="ChEBI" id="CHEBI:15378"/>
        <dbReference type="ChEBI" id="CHEBI:27632"/>
        <dbReference type="ChEBI" id="CHEBI:45616"/>
        <dbReference type="ChEBI" id="CHEBI:57783"/>
        <dbReference type="ChEBI" id="CHEBI:58349"/>
    </reaction>
</comment>
<comment type="catalytic activity">
    <reaction evidence="2">
        <text>2,5-hexanedione + 2 NADPH + 2 H(+) = (2R,5R)-hexanediol + 2 NADP(+)</text>
        <dbReference type="Rhea" id="RHEA:68140"/>
        <dbReference type="ChEBI" id="CHEBI:15378"/>
        <dbReference type="ChEBI" id="CHEBI:57783"/>
        <dbReference type="ChEBI" id="CHEBI:58349"/>
        <dbReference type="ChEBI" id="CHEBI:85014"/>
        <dbReference type="ChEBI" id="CHEBI:177024"/>
    </reaction>
</comment>
<comment type="catalytic activity">
    <reaction evidence="2">
        <text>ethyl 3-oxobutanoate + NADPH + H(+) = ethyl (R)-3-hydroxybutanoate + NADP(+)</text>
        <dbReference type="Rhea" id="RHEA:68144"/>
        <dbReference type="ChEBI" id="CHEBI:4893"/>
        <dbReference type="ChEBI" id="CHEBI:15378"/>
        <dbReference type="ChEBI" id="CHEBI:28707"/>
        <dbReference type="ChEBI" id="CHEBI:57783"/>
        <dbReference type="ChEBI" id="CHEBI:58349"/>
    </reaction>
</comment>
<comment type="catalytic activity">
    <reaction evidence="2">
        <text>2-octanone + NADPH + H(+) = (2R)-octan-2-ol + NADP(+)</text>
        <dbReference type="Rhea" id="RHEA:68148"/>
        <dbReference type="ChEBI" id="CHEBI:15378"/>
        <dbReference type="ChEBI" id="CHEBI:37871"/>
        <dbReference type="ChEBI" id="CHEBI:57783"/>
        <dbReference type="ChEBI" id="CHEBI:58349"/>
        <dbReference type="ChEBI" id="CHEBI:87434"/>
    </reaction>
</comment>
<comment type="cofactor">
    <cofactor evidence="2">
        <name>Mg(2+)</name>
        <dbReference type="ChEBI" id="CHEBI:18420"/>
    </cofactor>
</comment>
<comment type="biophysicochemical properties">
    <kinetics>
        <KM evidence="2">1.9 mM for acetophenone</KM>
        <KM evidence="2">3.09 mM for (R,S)-1-phenylethanol</KM>
        <KM evidence="2">0.14 mM for NADPH</KM>
        <KM evidence="2">0.03 mM for NADP</KM>
        <KM evidence="2">0.4 mM for NADH</KM>
        <KM evidence="2">0.78 mM for NAD</KM>
        <Vmax evidence="2">400.0 umol/min/mg enzyme for the NADPH-dependent reduction of acetophenone</Vmax>
        <Vmax evidence="2">2.9 umol/min/mg enzyme for the NADH-dependent reduction of acetophenone</Vmax>
        <Vmax evidence="2">15.3 umol/min/mg enzyme for the NADP-dependent oxidation of (R,S)-1-phenylethanol</Vmax>
        <Vmax evidence="2">0.49 umol/min/mg enzyme for the NAD-dependent oxidation of (R,S)-1-phenylethanol</Vmax>
    </kinetics>
    <phDependence>
        <text evidence="2">Optimum pH is 7.0 with acetophenone as substrate.</text>
    </phDependence>
    <temperatureDependence>
        <text evidence="2">Optimum temperature is 50 degrees Celsius with acetophenone as substrate.</text>
    </temperatureDependence>
</comment>
<comment type="subunit">
    <text evidence="2">Homotetramer.</text>
</comment>
<comment type="biotechnology">
    <text evidence="7">Because of its broad substrate specificity and its ability to produce chiral alcohols with high enantiomeric excesses, this protein from L.kefiri is a very interesting enzyme for preparative applications in the synthesis of pharmaceuticals and agrochemicals.</text>
</comment>
<comment type="similarity">
    <text evidence="5">Belongs to the short-chain dehydrogenases/reductases (SDR) family.</text>
</comment>